<name>EFG1_SACD2</name>
<dbReference type="EMBL" id="CP000282">
    <property type="protein sequence ID" value="ABD80190.1"/>
    <property type="molecule type" value="Genomic_DNA"/>
</dbReference>
<dbReference type="RefSeq" id="WP_011467411.1">
    <property type="nucleotide sequence ID" value="NC_007912.1"/>
</dbReference>
<dbReference type="SMR" id="Q21M89"/>
<dbReference type="STRING" id="203122.Sde_0928"/>
<dbReference type="GeneID" id="98612614"/>
<dbReference type="KEGG" id="sde:Sde_0928"/>
<dbReference type="eggNOG" id="COG0480">
    <property type="taxonomic scope" value="Bacteria"/>
</dbReference>
<dbReference type="HOGENOM" id="CLU_002794_4_1_6"/>
<dbReference type="OrthoDB" id="9801472at2"/>
<dbReference type="Proteomes" id="UP000001947">
    <property type="component" value="Chromosome"/>
</dbReference>
<dbReference type="GO" id="GO:0005737">
    <property type="term" value="C:cytoplasm"/>
    <property type="evidence" value="ECO:0007669"/>
    <property type="project" value="UniProtKB-SubCell"/>
</dbReference>
<dbReference type="GO" id="GO:0005525">
    <property type="term" value="F:GTP binding"/>
    <property type="evidence" value="ECO:0007669"/>
    <property type="project" value="UniProtKB-UniRule"/>
</dbReference>
<dbReference type="GO" id="GO:0003924">
    <property type="term" value="F:GTPase activity"/>
    <property type="evidence" value="ECO:0007669"/>
    <property type="project" value="InterPro"/>
</dbReference>
<dbReference type="GO" id="GO:0097216">
    <property type="term" value="F:guanosine tetraphosphate binding"/>
    <property type="evidence" value="ECO:0007669"/>
    <property type="project" value="UniProtKB-ARBA"/>
</dbReference>
<dbReference type="GO" id="GO:0003746">
    <property type="term" value="F:translation elongation factor activity"/>
    <property type="evidence" value="ECO:0007669"/>
    <property type="project" value="UniProtKB-UniRule"/>
</dbReference>
<dbReference type="GO" id="GO:0032790">
    <property type="term" value="P:ribosome disassembly"/>
    <property type="evidence" value="ECO:0007669"/>
    <property type="project" value="TreeGrafter"/>
</dbReference>
<dbReference type="CDD" id="cd01886">
    <property type="entry name" value="EF-G"/>
    <property type="match status" value="1"/>
</dbReference>
<dbReference type="CDD" id="cd16262">
    <property type="entry name" value="EFG_III"/>
    <property type="match status" value="1"/>
</dbReference>
<dbReference type="CDD" id="cd01434">
    <property type="entry name" value="EFG_mtEFG1_IV"/>
    <property type="match status" value="1"/>
</dbReference>
<dbReference type="CDD" id="cd03713">
    <property type="entry name" value="EFG_mtEFG_C"/>
    <property type="match status" value="1"/>
</dbReference>
<dbReference type="CDD" id="cd04088">
    <property type="entry name" value="EFG_mtEFG_II"/>
    <property type="match status" value="1"/>
</dbReference>
<dbReference type="FunFam" id="2.40.30.10:FF:000006">
    <property type="entry name" value="Elongation factor G"/>
    <property type="match status" value="1"/>
</dbReference>
<dbReference type="FunFam" id="3.30.230.10:FF:000003">
    <property type="entry name" value="Elongation factor G"/>
    <property type="match status" value="1"/>
</dbReference>
<dbReference type="FunFam" id="3.30.70.240:FF:000001">
    <property type="entry name" value="Elongation factor G"/>
    <property type="match status" value="1"/>
</dbReference>
<dbReference type="FunFam" id="3.30.70.870:FF:000001">
    <property type="entry name" value="Elongation factor G"/>
    <property type="match status" value="1"/>
</dbReference>
<dbReference type="FunFam" id="3.40.50.300:FF:000029">
    <property type="entry name" value="Elongation factor G"/>
    <property type="match status" value="1"/>
</dbReference>
<dbReference type="Gene3D" id="3.30.230.10">
    <property type="match status" value="1"/>
</dbReference>
<dbReference type="Gene3D" id="3.30.70.240">
    <property type="match status" value="1"/>
</dbReference>
<dbReference type="Gene3D" id="3.30.70.870">
    <property type="entry name" value="Elongation Factor G (Translational Gtpase), domain 3"/>
    <property type="match status" value="1"/>
</dbReference>
<dbReference type="Gene3D" id="3.40.50.300">
    <property type="entry name" value="P-loop containing nucleotide triphosphate hydrolases"/>
    <property type="match status" value="1"/>
</dbReference>
<dbReference type="Gene3D" id="2.40.30.10">
    <property type="entry name" value="Translation factors"/>
    <property type="match status" value="1"/>
</dbReference>
<dbReference type="HAMAP" id="MF_00054_B">
    <property type="entry name" value="EF_G_EF_2_B"/>
    <property type="match status" value="1"/>
</dbReference>
<dbReference type="InterPro" id="IPR041095">
    <property type="entry name" value="EFG_II"/>
</dbReference>
<dbReference type="InterPro" id="IPR009022">
    <property type="entry name" value="EFG_III"/>
</dbReference>
<dbReference type="InterPro" id="IPR035647">
    <property type="entry name" value="EFG_III/V"/>
</dbReference>
<dbReference type="InterPro" id="IPR047872">
    <property type="entry name" value="EFG_IV"/>
</dbReference>
<dbReference type="InterPro" id="IPR035649">
    <property type="entry name" value="EFG_V"/>
</dbReference>
<dbReference type="InterPro" id="IPR000640">
    <property type="entry name" value="EFG_V-like"/>
</dbReference>
<dbReference type="InterPro" id="IPR004161">
    <property type="entry name" value="EFTu-like_2"/>
</dbReference>
<dbReference type="InterPro" id="IPR031157">
    <property type="entry name" value="G_TR_CS"/>
</dbReference>
<dbReference type="InterPro" id="IPR027417">
    <property type="entry name" value="P-loop_NTPase"/>
</dbReference>
<dbReference type="InterPro" id="IPR020568">
    <property type="entry name" value="Ribosomal_Su5_D2-typ_SF"/>
</dbReference>
<dbReference type="InterPro" id="IPR014721">
    <property type="entry name" value="Ribsml_uS5_D2-typ_fold_subgr"/>
</dbReference>
<dbReference type="InterPro" id="IPR005225">
    <property type="entry name" value="Small_GTP-bd"/>
</dbReference>
<dbReference type="InterPro" id="IPR000795">
    <property type="entry name" value="T_Tr_GTP-bd_dom"/>
</dbReference>
<dbReference type="InterPro" id="IPR009000">
    <property type="entry name" value="Transl_B-barrel_sf"/>
</dbReference>
<dbReference type="InterPro" id="IPR004540">
    <property type="entry name" value="Transl_elong_EFG/EF2"/>
</dbReference>
<dbReference type="InterPro" id="IPR005517">
    <property type="entry name" value="Transl_elong_EFG/EF2_IV"/>
</dbReference>
<dbReference type="NCBIfam" id="TIGR00484">
    <property type="entry name" value="EF-G"/>
    <property type="match status" value="1"/>
</dbReference>
<dbReference type="NCBIfam" id="NF009381">
    <property type="entry name" value="PRK12740.1-5"/>
    <property type="match status" value="1"/>
</dbReference>
<dbReference type="NCBIfam" id="TIGR00231">
    <property type="entry name" value="small_GTP"/>
    <property type="match status" value="1"/>
</dbReference>
<dbReference type="PANTHER" id="PTHR43261:SF1">
    <property type="entry name" value="RIBOSOME-RELEASING FACTOR 2, MITOCHONDRIAL"/>
    <property type="match status" value="1"/>
</dbReference>
<dbReference type="PANTHER" id="PTHR43261">
    <property type="entry name" value="TRANSLATION ELONGATION FACTOR G-RELATED"/>
    <property type="match status" value="1"/>
</dbReference>
<dbReference type="Pfam" id="PF00679">
    <property type="entry name" value="EFG_C"/>
    <property type="match status" value="1"/>
</dbReference>
<dbReference type="Pfam" id="PF14492">
    <property type="entry name" value="EFG_III"/>
    <property type="match status" value="1"/>
</dbReference>
<dbReference type="Pfam" id="PF03764">
    <property type="entry name" value="EFG_IV"/>
    <property type="match status" value="1"/>
</dbReference>
<dbReference type="Pfam" id="PF00009">
    <property type="entry name" value="GTP_EFTU"/>
    <property type="match status" value="1"/>
</dbReference>
<dbReference type="Pfam" id="PF03144">
    <property type="entry name" value="GTP_EFTU_D2"/>
    <property type="match status" value="1"/>
</dbReference>
<dbReference type="PRINTS" id="PR00315">
    <property type="entry name" value="ELONGATNFCT"/>
</dbReference>
<dbReference type="SMART" id="SM00838">
    <property type="entry name" value="EFG_C"/>
    <property type="match status" value="1"/>
</dbReference>
<dbReference type="SMART" id="SM00889">
    <property type="entry name" value="EFG_IV"/>
    <property type="match status" value="1"/>
</dbReference>
<dbReference type="SUPFAM" id="SSF54980">
    <property type="entry name" value="EF-G C-terminal domain-like"/>
    <property type="match status" value="2"/>
</dbReference>
<dbReference type="SUPFAM" id="SSF52540">
    <property type="entry name" value="P-loop containing nucleoside triphosphate hydrolases"/>
    <property type="match status" value="1"/>
</dbReference>
<dbReference type="SUPFAM" id="SSF54211">
    <property type="entry name" value="Ribosomal protein S5 domain 2-like"/>
    <property type="match status" value="1"/>
</dbReference>
<dbReference type="SUPFAM" id="SSF50447">
    <property type="entry name" value="Translation proteins"/>
    <property type="match status" value="1"/>
</dbReference>
<dbReference type="PROSITE" id="PS00301">
    <property type="entry name" value="G_TR_1"/>
    <property type="match status" value="1"/>
</dbReference>
<dbReference type="PROSITE" id="PS51722">
    <property type="entry name" value="G_TR_2"/>
    <property type="match status" value="1"/>
</dbReference>
<keyword id="KW-0963">Cytoplasm</keyword>
<keyword id="KW-0251">Elongation factor</keyword>
<keyword id="KW-0342">GTP-binding</keyword>
<keyword id="KW-0547">Nucleotide-binding</keyword>
<keyword id="KW-0648">Protein biosynthesis</keyword>
<keyword id="KW-1185">Reference proteome</keyword>
<feature type="chain" id="PRO_0000263500" description="Elongation factor G 1">
    <location>
        <begin position="1"/>
        <end position="701"/>
    </location>
</feature>
<feature type="domain" description="tr-type G">
    <location>
        <begin position="8"/>
        <end position="290"/>
    </location>
</feature>
<feature type="binding site" evidence="1">
    <location>
        <begin position="17"/>
        <end position="24"/>
    </location>
    <ligand>
        <name>GTP</name>
        <dbReference type="ChEBI" id="CHEBI:37565"/>
    </ligand>
</feature>
<feature type="binding site" evidence="1">
    <location>
        <begin position="88"/>
        <end position="92"/>
    </location>
    <ligand>
        <name>GTP</name>
        <dbReference type="ChEBI" id="CHEBI:37565"/>
    </ligand>
</feature>
<feature type="binding site" evidence="1">
    <location>
        <begin position="142"/>
        <end position="145"/>
    </location>
    <ligand>
        <name>GTP</name>
        <dbReference type="ChEBI" id="CHEBI:37565"/>
    </ligand>
</feature>
<organism>
    <name type="scientific">Saccharophagus degradans (strain 2-40 / ATCC 43961 / DSM 17024)</name>
    <dbReference type="NCBI Taxonomy" id="203122"/>
    <lineage>
        <taxon>Bacteria</taxon>
        <taxon>Pseudomonadati</taxon>
        <taxon>Pseudomonadota</taxon>
        <taxon>Gammaproteobacteria</taxon>
        <taxon>Cellvibrionales</taxon>
        <taxon>Cellvibrionaceae</taxon>
        <taxon>Saccharophagus</taxon>
    </lineage>
</organism>
<protein>
    <recommendedName>
        <fullName evidence="1">Elongation factor G 1</fullName>
        <shortName evidence="1">EF-G 1</shortName>
    </recommendedName>
</protein>
<evidence type="ECO:0000255" key="1">
    <source>
        <dbReference type="HAMAP-Rule" id="MF_00054"/>
    </source>
</evidence>
<proteinExistence type="inferred from homology"/>
<gene>
    <name evidence="1" type="primary">fusA1</name>
    <name type="ordered locus">Sde_0928</name>
</gene>
<accession>Q21M89</accession>
<comment type="function">
    <text evidence="1">Catalyzes the GTP-dependent ribosomal translocation step during translation elongation. During this step, the ribosome changes from the pre-translocational (PRE) to the post-translocational (POST) state as the newly formed A-site-bound peptidyl-tRNA and P-site-bound deacylated tRNA move to the P and E sites, respectively. Catalyzes the coordinated movement of the two tRNA molecules, the mRNA and conformational changes in the ribosome.</text>
</comment>
<comment type="subcellular location">
    <subcellularLocation>
        <location evidence="1">Cytoplasm</location>
    </subcellularLocation>
</comment>
<comment type="similarity">
    <text evidence="1">Belongs to the TRAFAC class translation factor GTPase superfamily. Classic translation factor GTPase family. EF-G/EF-2 subfamily.</text>
</comment>
<reference key="1">
    <citation type="journal article" date="2008" name="PLoS Genet.">
        <title>Complete genome sequence of the complex carbohydrate-degrading marine bacterium, Saccharophagus degradans strain 2-40 T.</title>
        <authorList>
            <person name="Weiner R.M."/>
            <person name="Taylor L.E. II"/>
            <person name="Henrissat B."/>
            <person name="Hauser L."/>
            <person name="Land M."/>
            <person name="Coutinho P.M."/>
            <person name="Rancurel C."/>
            <person name="Saunders E.H."/>
            <person name="Longmire A.G."/>
            <person name="Zhang H."/>
            <person name="Bayer E.A."/>
            <person name="Gilbert H.J."/>
            <person name="Larimer F."/>
            <person name="Zhulin I.B."/>
            <person name="Ekborg N.A."/>
            <person name="Lamed R."/>
            <person name="Richardson P.M."/>
            <person name="Borovok I."/>
            <person name="Hutcheson S."/>
        </authorList>
    </citation>
    <scope>NUCLEOTIDE SEQUENCE [LARGE SCALE GENOMIC DNA]</scope>
    <source>
        <strain>2-40 / ATCC 43961 / DSM 17024</strain>
    </source>
</reference>
<sequence>MARKTPIVRYRNIGICAHVDAGKTTTTERVLFYTGLSHKIGEVHDGAATMDWMEQEQERGITITSAATTCFWSGMQQQFPQHRINIIDTPGHVDFTIEVERSLRVLDGAVVVLCGSSGVQPQTETVWRQANKYEVPRLVFVNKMDRAGANFRSVVQQLRDRLGANAVPLHMTIGAEDGFEGVIDLIKMKSIHWNEADMGMTFEYGEVPEDLLEECEEMREYAVEAAAEANDDLMEKYLETGELSEDEIKAGLRARTLANEIVPVLGGSAFKNKGVQAVLDAVVEYLPAPTEVKAIEGTLIDGETVDTRVADDDAPFAALAFKIATDPFVGTLTFFRVYSGRLESGTAVYNSVKQKRERVGRMVQMHSNNREEIKEVLAGDIAAAIGLKDVTTGDTLCAESNKIVLERMEFPEPVISVAVEPRTVPDQEKMAVALAKLAQEDPSFRVATDEETGQTIISGMGELHLDIIVDRMRREFGVDANIGKPQVAYRERITRTCEVEGKFVRQSGGRGQYGHVWIRFEPADDNNAEGLVFENEVVGGAVPKEYIPAVEKGISEQMRNGVLAGYPLLGLKATIYDGSFHDVDSNEMAFKIAASIATKNLAAEGGAVLLEPVMKVEVVTPEENMGDVVGDLNRRRGLIQGMEECISGKVVRAEVPLAEMFGYATDLRSATQGRATFTMEFQQYSEAPKNVADEIMARNGR</sequence>